<comment type="function">
    <text>Deltorphin is a heptapeptide with a very potent opiate-like activity. Has high affinity and selectivity for delta-type opioid receptors. The two dermorphin-like peptides have a similar affinity and selectivity for the mu opioid receptor as dermorphin.</text>
</comment>
<comment type="subcellular location">
    <subcellularLocation>
        <location>Secreted</location>
    </subcellularLocation>
</comment>
<comment type="tissue specificity">
    <text>Expressed by the skin glands.</text>
</comment>
<comment type="similarity">
    <text evidence="4">Belongs to the frog skin active peptide (FSAP) family. Dermorphin subfamily.</text>
</comment>
<accession>P21850</accession>
<sequence>MSFLKKSLLLVLFLGLVSHSVCKEEKRETEEENENEEENHEVGSEMKRYAFWYPNRDTEEKNENEEENQEEGSEMKRYAFGYPKREPEEENENEEENHEEGSEMKRYAFEVVGGEAKKMKREPEEENENEEENHEEGSEMKRYAFDVVGGEAKKMKREPEEENENEEENHEEGSEMKRYAFDVVGGEAKKMKREPEEENENEEENHEEGSEMKRYAFDVVGGEAKKM</sequence>
<reference key="1">
    <citation type="journal article" date="1990" name="Proc. Natl. Acad. Sci. U.S.A.">
        <title>cDNAs encoding [D-Ala2]deltorphin precursors from skin of Phyllomedusa bicolor also contain genetic information for three dermorphin-related opioid peptides.</title>
        <authorList>
            <person name="Richter K."/>
            <person name="Egger R."/>
            <person name="Negri L."/>
            <person name="Corsi R."/>
            <person name="Severini C."/>
            <person name="Kreil G."/>
        </authorList>
    </citation>
    <scope>NUCLEOTIDE SEQUENCE [MRNA]</scope>
    <scope>D-AMINO ACID AT ALA-50; ALA-79; ALA-108; ALA-144; ALA-180 AND ALA-216</scope>
    <scope>AMIDATION AT GLY-113; GLY-149; GLY-185 AND GLY-221</scope>
    <source>
        <tissue>Skin</tissue>
    </source>
</reference>
<feature type="signal peptide" evidence="1">
    <location>
        <begin position="1"/>
        <end position="20"/>
    </location>
</feature>
<feature type="propeptide" id="PRO_0000010204">
    <location>
        <begin position="21"/>
        <end position="46"/>
    </location>
</feature>
<feature type="peptide" id="PRO_0000010205" description="[D-Ala2]-dermorphin-like 1">
    <location>
        <begin position="49"/>
        <end position="55"/>
    </location>
</feature>
<feature type="propeptide" id="PRO_0000010206">
    <location>
        <begin position="57"/>
        <end position="75"/>
    </location>
</feature>
<feature type="peptide" id="PRO_0000010207" description="[D-Ala2]-dermorphin-like 2">
    <location>
        <begin position="78"/>
        <end position="83"/>
    </location>
</feature>
<feature type="propeptide" id="PRO_0000010208">
    <location>
        <begin position="86"/>
        <end position="104"/>
    </location>
</feature>
<feature type="peptide" id="PRO_0000010209" description="[D-Ala2]-deltorphin-2">
    <location>
        <begin position="107"/>
        <end position="113"/>
    </location>
</feature>
<feature type="propeptide" id="PRO_0000010210">
    <location>
        <begin position="115"/>
        <end position="140"/>
    </location>
</feature>
<feature type="peptide" id="PRO_0000010211" description="[D-Ala2]-deltorphin-1">
    <location>
        <begin position="143"/>
        <end position="149"/>
    </location>
</feature>
<feature type="propeptide" id="PRO_0000010212">
    <location>
        <begin position="151"/>
        <end position="176"/>
    </location>
</feature>
<feature type="peptide" id="PRO_0000010213" description="[D-Ala2]-deltorphin-1">
    <location>
        <begin position="179"/>
        <end position="185"/>
    </location>
</feature>
<feature type="propeptide" id="PRO_0000010214">
    <location>
        <begin position="187"/>
        <end position="212"/>
    </location>
</feature>
<feature type="peptide" id="PRO_0000010215" description="[D-Ala2]-deltorphin-1">
    <location>
        <begin position="215"/>
        <end position="221"/>
    </location>
</feature>
<feature type="propeptide" id="PRO_0000010216">
    <location>
        <begin position="223"/>
        <end position="227"/>
    </location>
</feature>
<feature type="region of interest" description="Disordered" evidence="2">
    <location>
        <begin position="22"/>
        <end position="227"/>
    </location>
</feature>
<feature type="compositionally biased region" description="Acidic residues" evidence="2">
    <location>
        <begin position="30"/>
        <end position="39"/>
    </location>
</feature>
<feature type="compositionally biased region" description="Acidic residues" evidence="2">
    <location>
        <begin position="62"/>
        <end position="72"/>
    </location>
</feature>
<feature type="compositionally biased region" description="Basic and acidic residues" evidence="2">
    <location>
        <begin position="73"/>
        <end position="87"/>
    </location>
</feature>
<feature type="compositionally biased region" description="Acidic residues" evidence="2">
    <location>
        <begin position="88"/>
        <end position="98"/>
    </location>
</feature>
<feature type="compositionally biased region" description="Basic and acidic residues" evidence="2">
    <location>
        <begin position="99"/>
        <end position="108"/>
    </location>
</feature>
<feature type="compositionally biased region" description="Acidic residues" evidence="2">
    <location>
        <begin position="124"/>
        <end position="134"/>
    </location>
</feature>
<feature type="compositionally biased region" description="Basic and acidic residues" evidence="2">
    <location>
        <begin position="135"/>
        <end position="144"/>
    </location>
</feature>
<feature type="compositionally biased region" description="Acidic residues" evidence="2">
    <location>
        <begin position="160"/>
        <end position="170"/>
    </location>
</feature>
<feature type="compositionally biased region" description="Basic and acidic residues" evidence="2">
    <location>
        <begin position="171"/>
        <end position="180"/>
    </location>
</feature>
<feature type="compositionally biased region" description="Acidic residues" evidence="2">
    <location>
        <begin position="196"/>
        <end position="206"/>
    </location>
</feature>
<feature type="compositionally biased region" description="Basic and acidic residues" evidence="2">
    <location>
        <begin position="207"/>
        <end position="216"/>
    </location>
</feature>
<feature type="modified residue" description="D-alanine (Ala)" evidence="3">
    <location>
        <position position="50"/>
    </location>
</feature>
<feature type="modified residue" description="D-alanine (Ala)" evidence="3">
    <location>
        <position position="79"/>
    </location>
</feature>
<feature type="modified residue" description="D-alanine (Ala)" evidence="3">
    <location>
        <position position="108"/>
    </location>
</feature>
<feature type="modified residue" description="Glycine amide" evidence="3">
    <location>
        <position position="113"/>
    </location>
</feature>
<feature type="modified residue" description="D-alanine (Ala)" evidence="3">
    <location>
        <position position="144"/>
    </location>
</feature>
<feature type="modified residue" description="Glycine amide" evidence="3">
    <location>
        <position position="149"/>
    </location>
</feature>
<feature type="modified residue" description="D-alanine (Ala)" evidence="3">
    <location>
        <position position="180"/>
    </location>
</feature>
<feature type="modified residue" description="Glycine amide" evidence="3">
    <location>
        <position position="185"/>
    </location>
</feature>
<feature type="modified residue" description="D-alanine (Ala)" evidence="3">
    <location>
        <position position="216"/>
    </location>
</feature>
<feature type="modified residue" description="Glycine amide" evidence="3">
    <location>
        <position position="221"/>
    </location>
</feature>
<feature type="sequence variant" description="In clone AD3.">
    <location>
        <begin position="53"/>
        <end position="54"/>
    </location>
</feature>
<feature type="sequence variant" description="In clone AD7.">
    <location>
        <begin position="120"/>
        <end position="227"/>
    </location>
</feature>
<feature type="sequence variant" description="In clone AD8.">
    <location>
        <begin position="156"/>
        <end position="227"/>
    </location>
</feature>
<feature type="helix" evidence="5">
    <location>
        <begin position="109"/>
        <end position="112"/>
    </location>
</feature>
<name>DA2D_PHYBI</name>
<evidence type="ECO:0000255" key="1"/>
<evidence type="ECO:0000256" key="2">
    <source>
        <dbReference type="SAM" id="MobiDB-lite"/>
    </source>
</evidence>
<evidence type="ECO:0000269" key="3">
    <source>
    </source>
</evidence>
<evidence type="ECO:0000305" key="4"/>
<evidence type="ECO:0007829" key="5">
    <source>
        <dbReference type="PDB" id="8F7S"/>
    </source>
</evidence>
<protein>
    <recommendedName>
        <fullName>[D-Ala2]-deltorphins</fullName>
    </recommendedName>
    <component>
        <recommendedName>
            <fullName>[D-Ala2]-dermorphin-like 1</fullName>
        </recommendedName>
    </component>
    <component>
        <recommendedName>
            <fullName>[D-Ala2]-dermorphin-like 2</fullName>
        </recommendedName>
    </component>
    <component>
        <recommendedName>
            <fullName>[D-Ala2]-deltorphin-2</fullName>
        </recommendedName>
        <alternativeName>
            <fullName>[D-Ala2]-deltorphin II</fullName>
        </alternativeName>
    </component>
    <component>
        <recommendedName>
            <fullName>[D-Ala2]-deltorphin-1</fullName>
        </recommendedName>
        <alternativeName>
            <fullName>[D-Ala2]-deltorphin I</fullName>
        </alternativeName>
    </component>
</protein>
<dbReference type="EMBL" id="M34560">
    <property type="protein sequence ID" value="AAA49451.1"/>
    <property type="molecule type" value="mRNA"/>
</dbReference>
<dbReference type="PIR" id="A35514">
    <property type="entry name" value="A35514"/>
</dbReference>
<dbReference type="PIR" id="S21230">
    <property type="entry name" value="S21230"/>
</dbReference>
<dbReference type="PIR" id="S36662">
    <property type="entry name" value="S36662"/>
</dbReference>
<dbReference type="PDB" id="8F7S">
    <property type="method" value="EM"/>
    <property type="resolution" value="3.00 A"/>
    <property type="chains" value="P/Q=107-113"/>
</dbReference>
<dbReference type="PDBsum" id="8F7S"/>
<dbReference type="EMDB" id="EMD-28909"/>
<dbReference type="SMR" id="P21850"/>
<dbReference type="GO" id="GO:0005576">
    <property type="term" value="C:extracellular region"/>
    <property type="evidence" value="ECO:0007669"/>
    <property type="project" value="UniProtKB-SubCell"/>
</dbReference>
<dbReference type="GO" id="GO:0001515">
    <property type="term" value="F:opioid peptide activity"/>
    <property type="evidence" value="ECO:0007669"/>
    <property type="project" value="UniProtKB-KW"/>
</dbReference>
<dbReference type="GO" id="GO:0006952">
    <property type="term" value="P:defense response"/>
    <property type="evidence" value="ECO:0007669"/>
    <property type="project" value="UniProtKB-KW"/>
</dbReference>
<dbReference type="GO" id="GO:0007218">
    <property type="term" value="P:neuropeptide signaling pathway"/>
    <property type="evidence" value="ECO:0007669"/>
    <property type="project" value="UniProtKB-KW"/>
</dbReference>
<dbReference type="InterPro" id="IPR004275">
    <property type="entry name" value="Frog_antimicrobial_propeptide"/>
</dbReference>
<dbReference type="Pfam" id="PF03032">
    <property type="entry name" value="FSAP_sig_propep"/>
    <property type="match status" value="1"/>
</dbReference>
<keyword id="KW-0002">3D-structure</keyword>
<keyword id="KW-0027">Amidation</keyword>
<keyword id="KW-0878">Amphibian defense peptide</keyword>
<keyword id="KW-0165">Cleavage on pair of basic residues</keyword>
<keyword id="KW-0208">D-amino acid</keyword>
<keyword id="KW-0257">Endorphin</keyword>
<keyword id="KW-0555">Opioid peptide</keyword>
<keyword id="KW-0677">Repeat</keyword>
<keyword id="KW-0964">Secreted</keyword>
<keyword id="KW-0732">Signal</keyword>
<organism>
    <name type="scientific">Phyllomedusa bicolor</name>
    <name type="common">Two-colored leaf frog</name>
    <name type="synonym">Rana bicolor</name>
    <dbReference type="NCBI Taxonomy" id="8393"/>
    <lineage>
        <taxon>Eukaryota</taxon>
        <taxon>Metazoa</taxon>
        <taxon>Chordata</taxon>
        <taxon>Craniata</taxon>
        <taxon>Vertebrata</taxon>
        <taxon>Euteleostomi</taxon>
        <taxon>Amphibia</taxon>
        <taxon>Batrachia</taxon>
        <taxon>Anura</taxon>
        <taxon>Neobatrachia</taxon>
        <taxon>Hyloidea</taxon>
        <taxon>Hylidae</taxon>
        <taxon>Phyllomedusinae</taxon>
        <taxon>Phyllomedusa</taxon>
    </lineage>
</organism>
<proteinExistence type="evidence at protein level"/>